<name>VDAC_CANAL</name>
<protein>
    <recommendedName>
        <fullName>Mitochondrial outer membrane protein porin</fullName>
    </recommendedName>
    <alternativeName>
        <fullName>Cytoplasmic antigenic protein 4</fullName>
    </alternativeName>
</protein>
<reference key="1">
    <citation type="journal article" date="2004" name="Proc. Natl. Acad. Sci. U.S.A.">
        <title>The diploid genome sequence of Candida albicans.</title>
        <authorList>
            <person name="Jones T."/>
            <person name="Federspiel N.A."/>
            <person name="Chibana H."/>
            <person name="Dungan J."/>
            <person name="Kalman S."/>
            <person name="Magee B.B."/>
            <person name="Newport G."/>
            <person name="Thorstenson Y.R."/>
            <person name="Agabian N."/>
            <person name="Magee P.T."/>
            <person name="Davis R.W."/>
            <person name="Scherer S."/>
        </authorList>
    </citation>
    <scope>NUCLEOTIDE SEQUENCE [LARGE SCALE GENOMIC DNA]</scope>
    <source>
        <strain>SC5314 / ATCC MYA-2876</strain>
    </source>
</reference>
<reference key="2">
    <citation type="journal article" date="2007" name="Genome Biol.">
        <title>Assembly of the Candida albicans genome into sixteen supercontigs aligned on the eight chromosomes.</title>
        <authorList>
            <person name="van het Hoog M."/>
            <person name="Rast T.J."/>
            <person name="Martchenko M."/>
            <person name="Grindle S."/>
            <person name="Dignard D."/>
            <person name="Hogues H."/>
            <person name="Cuomo C."/>
            <person name="Berriman M."/>
            <person name="Scherer S."/>
            <person name="Magee B.B."/>
            <person name="Whiteway M."/>
            <person name="Chibana H."/>
            <person name="Nantel A."/>
            <person name="Magee P.T."/>
        </authorList>
    </citation>
    <scope>GENOME REANNOTATION</scope>
    <source>
        <strain>SC5314 / ATCC MYA-2876</strain>
    </source>
</reference>
<reference key="3">
    <citation type="journal article" date="2013" name="Genome Biol.">
        <title>Assembly of a phased diploid Candida albicans genome facilitates allele-specific measurements and provides a simple model for repeat and indel structure.</title>
        <authorList>
            <person name="Muzzey D."/>
            <person name="Schwartz K."/>
            <person name="Weissman J.S."/>
            <person name="Sherlock G."/>
        </authorList>
    </citation>
    <scope>NUCLEOTIDE SEQUENCE [LARGE SCALE GENOMIC DNA]</scope>
    <scope>GENOME REANNOTATION</scope>
    <source>
        <strain>SC5314 / ATCC MYA-2876</strain>
    </source>
</reference>
<reference key="4">
    <citation type="journal article" date="2004" name="Proteomics">
        <title>Proteomics-based identification of novel Candida albicans antigens for diagnosis of systemic candidiasis in patients with underlying hematological malignancies.</title>
        <authorList>
            <person name="Pitarch A."/>
            <person name="Abian J."/>
            <person name="Carrascal M."/>
            <person name="Sanchez M."/>
            <person name="Nombela C."/>
            <person name="Gil C."/>
        </authorList>
    </citation>
    <scope>PROTEIN SEQUENCE OF 98-105</scope>
    <scope>ANTIGENICITY</scope>
    <source>
        <strain>SC5314 / ATCC MYA-2876</strain>
        <tissue>Protoplast</tissue>
    </source>
</reference>
<evidence type="ECO:0000250" key="1"/>
<evidence type="ECO:0000305" key="2"/>
<keyword id="KW-0903">Direct protein sequencing</keyword>
<keyword id="KW-0406">Ion transport</keyword>
<keyword id="KW-0472">Membrane</keyword>
<keyword id="KW-0496">Mitochondrion</keyword>
<keyword id="KW-1000">Mitochondrion outer membrane</keyword>
<keyword id="KW-0626">Porin</keyword>
<keyword id="KW-1185">Reference proteome</keyword>
<keyword id="KW-0812">Transmembrane</keyword>
<keyword id="KW-1134">Transmembrane beta strand</keyword>
<keyword id="KW-0813">Transport</keyword>
<sequence length="282" mass="29767">MAPAAYSDLSKASNDLINKDFYHLSTAAVDVKTVAPNGVTFTVKGKTTKDDTISASVDAKYLDKATGLTLTQGWNNANALNTKIELSELLTPGLKGELDTSVVPNGARNAKLNFFYQQSAVNARLFFDLLKGPIATADLVVAHDGFTAGAELGYDISSAKVNKYSVGVGYANLNYGLAATATSNLSVFSAAYFHKVSPLVQVGAKATWDSIKSSNVNVEFATKYALDNTSFIKAKIADSGLTALSYTQELRPGVKLGLGASFDALKLAEPVHKLGFSLSFAA</sequence>
<organism>
    <name type="scientific">Candida albicans (strain SC5314 / ATCC MYA-2876)</name>
    <name type="common">Yeast</name>
    <dbReference type="NCBI Taxonomy" id="237561"/>
    <lineage>
        <taxon>Eukaryota</taxon>
        <taxon>Fungi</taxon>
        <taxon>Dikarya</taxon>
        <taxon>Ascomycota</taxon>
        <taxon>Saccharomycotina</taxon>
        <taxon>Pichiomycetes</taxon>
        <taxon>Debaryomycetaceae</taxon>
        <taxon>Candida/Lodderomyces clade</taxon>
        <taxon>Candida</taxon>
    </lineage>
</organism>
<accession>P83781</accession>
<accession>A0A1D8PD67</accession>
<accession>Q59VQ1</accession>
<accession>Q59VU7</accession>
<gene>
    <name type="primary">POR1</name>
    <name type="ordered locus">CAALFM_C104100CA</name>
    <name type="ORF">CaO19.1042</name>
    <name type="ORF">CaO19.8644</name>
</gene>
<comment type="function">
    <text evidence="1">Forms a channel through the cell membrane that allows diffusion of small hydrophilic molecules. The channel adopts an open conformation at low or zero membrane potential and a closed conformation at potentials above 30-40 mV. The open state has a weak anion selectivity whereas the closed state is cation-selective (By similarity).</text>
</comment>
<comment type="subcellular location">
    <subcellularLocation>
        <location evidence="1">Mitochondrion outer membrane</location>
    </subcellularLocation>
</comment>
<comment type="domain">
    <text evidence="1">Consists mainly of membrane-spanning sided beta-sheets.</text>
</comment>
<comment type="miscellaneous">
    <text>Has antigenic properties. Elicits a specific immune response in systemic candidiasis human patients undergoing malignant hematological disorders.</text>
</comment>
<comment type="similarity">
    <text evidence="2">Belongs to the eukaryotic mitochondrial porin family.</text>
</comment>
<proteinExistence type="evidence at protein level"/>
<feature type="chain" id="PRO_0000089304" description="Mitochondrial outer membrane protein porin">
    <location>
        <begin position="1"/>
        <end position="282"/>
    </location>
</feature>
<dbReference type="EMBL" id="CP017623">
    <property type="protein sequence ID" value="AOW26085.1"/>
    <property type="molecule type" value="Genomic_DNA"/>
</dbReference>
<dbReference type="RefSeq" id="XP_713647.1">
    <property type="nucleotide sequence ID" value="XM_708554.2"/>
</dbReference>
<dbReference type="SMR" id="P83781"/>
<dbReference type="BioGRID" id="1227761">
    <property type="interactions" value="3"/>
</dbReference>
<dbReference type="FunCoup" id="P83781">
    <property type="interactions" value="1159"/>
</dbReference>
<dbReference type="STRING" id="237561.P83781"/>
<dbReference type="EnsemblFungi" id="C1_04100C_A-T">
    <property type="protein sequence ID" value="C1_04100C_A-T-p1"/>
    <property type="gene ID" value="C1_04100C_A"/>
</dbReference>
<dbReference type="GeneID" id="3644698"/>
<dbReference type="KEGG" id="cal:CAALFM_C104100CA"/>
<dbReference type="CGD" id="CAL0000182381">
    <property type="gene designation" value="POR1"/>
</dbReference>
<dbReference type="VEuPathDB" id="FungiDB:C1_04100C_A"/>
<dbReference type="eggNOG" id="KOG3126">
    <property type="taxonomic scope" value="Eukaryota"/>
</dbReference>
<dbReference type="HOGENOM" id="CLU_044399_1_0_1"/>
<dbReference type="InParanoid" id="P83781"/>
<dbReference type="OMA" id="FKQPAFH"/>
<dbReference type="OrthoDB" id="7827681at2759"/>
<dbReference type="PRO" id="PR:P83781"/>
<dbReference type="Proteomes" id="UP000000559">
    <property type="component" value="Chromosome 1"/>
</dbReference>
<dbReference type="GO" id="GO:1903561">
    <property type="term" value="C:extracellular vesicle"/>
    <property type="evidence" value="ECO:0000314"/>
    <property type="project" value="CGD"/>
</dbReference>
<dbReference type="GO" id="GO:0016020">
    <property type="term" value="C:membrane"/>
    <property type="evidence" value="ECO:0000314"/>
    <property type="project" value="CGD"/>
</dbReference>
<dbReference type="GO" id="GO:0005741">
    <property type="term" value="C:mitochondrial outer membrane"/>
    <property type="evidence" value="ECO:0000318"/>
    <property type="project" value="GO_Central"/>
</dbReference>
<dbReference type="GO" id="GO:0005886">
    <property type="term" value="C:plasma membrane"/>
    <property type="evidence" value="ECO:0000314"/>
    <property type="project" value="CGD"/>
</dbReference>
<dbReference type="GO" id="GO:0046930">
    <property type="term" value="C:pore complex"/>
    <property type="evidence" value="ECO:0007669"/>
    <property type="project" value="UniProtKB-KW"/>
</dbReference>
<dbReference type="GO" id="GO:0015288">
    <property type="term" value="F:porin activity"/>
    <property type="evidence" value="ECO:0007669"/>
    <property type="project" value="UniProtKB-KW"/>
</dbReference>
<dbReference type="GO" id="GO:0008308">
    <property type="term" value="F:voltage-gated monoatomic anion channel activity"/>
    <property type="evidence" value="ECO:0000318"/>
    <property type="project" value="GO_Central"/>
</dbReference>
<dbReference type="CDD" id="cd07306">
    <property type="entry name" value="Porin3_VDAC"/>
    <property type="match status" value="1"/>
</dbReference>
<dbReference type="FunFam" id="2.40.160.10:FF:000004">
    <property type="entry name" value="Por1 mitochondrial outer membrane porin"/>
    <property type="match status" value="1"/>
</dbReference>
<dbReference type="Gene3D" id="2.40.160.10">
    <property type="entry name" value="Porin"/>
    <property type="match status" value="1"/>
</dbReference>
<dbReference type="InterPro" id="IPR023614">
    <property type="entry name" value="Porin_dom_sf"/>
</dbReference>
<dbReference type="InterPro" id="IPR001925">
    <property type="entry name" value="Porin_Euk"/>
</dbReference>
<dbReference type="InterPro" id="IPR027246">
    <property type="entry name" value="Porin_Euk/Tom40"/>
</dbReference>
<dbReference type="PANTHER" id="PTHR11743:SF70">
    <property type="entry name" value="GH26960P-RELATED"/>
    <property type="match status" value="1"/>
</dbReference>
<dbReference type="PANTHER" id="PTHR11743">
    <property type="entry name" value="VOLTAGE-DEPENDENT ANION-SELECTIVE CHANNEL"/>
    <property type="match status" value="1"/>
</dbReference>
<dbReference type="Pfam" id="PF01459">
    <property type="entry name" value="Porin_3"/>
    <property type="match status" value="1"/>
</dbReference>
<dbReference type="PRINTS" id="PR00185">
    <property type="entry name" value="EUKARYTPORIN"/>
</dbReference>